<evidence type="ECO:0000250" key="1"/>
<evidence type="ECO:0000255" key="2">
    <source>
        <dbReference type="HAMAP-Rule" id="MF_01302"/>
    </source>
</evidence>
<evidence type="ECO:0000305" key="3"/>
<comment type="function">
    <text evidence="2">One of the primary rRNA binding proteins, it binds directly to 16S rRNA central domain where it helps coordinate assembly of the platform of the 30S subunit.</text>
</comment>
<comment type="subunit">
    <text evidence="2">Part of the 30S ribosomal subunit. Contacts proteins S5 and S12.</text>
</comment>
<comment type="similarity">
    <text evidence="2">Belongs to the universal ribosomal protein uS8 family.</text>
</comment>
<feature type="initiator methionine" description="Removed" evidence="1">
    <location>
        <position position="1"/>
    </location>
</feature>
<feature type="chain" id="PRO_0000225892" description="Small ribosomal subunit protein uS8">
    <location>
        <begin position="2"/>
        <end position="130"/>
    </location>
</feature>
<gene>
    <name evidence="2" type="primary">rpsH</name>
    <name type="ordered locus">SDY_3482</name>
</gene>
<accession>Q32B45</accession>
<reference key="1">
    <citation type="journal article" date="2005" name="Nucleic Acids Res.">
        <title>Genome dynamics and diversity of Shigella species, the etiologic agents of bacillary dysentery.</title>
        <authorList>
            <person name="Yang F."/>
            <person name="Yang J."/>
            <person name="Zhang X."/>
            <person name="Chen L."/>
            <person name="Jiang Y."/>
            <person name="Yan Y."/>
            <person name="Tang X."/>
            <person name="Wang J."/>
            <person name="Xiong Z."/>
            <person name="Dong J."/>
            <person name="Xue Y."/>
            <person name="Zhu Y."/>
            <person name="Xu X."/>
            <person name="Sun L."/>
            <person name="Chen S."/>
            <person name="Nie H."/>
            <person name="Peng J."/>
            <person name="Xu J."/>
            <person name="Wang Y."/>
            <person name="Yuan Z."/>
            <person name="Wen Y."/>
            <person name="Yao Z."/>
            <person name="Shen Y."/>
            <person name="Qiang B."/>
            <person name="Hou Y."/>
            <person name="Yu J."/>
            <person name="Jin Q."/>
        </authorList>
    </citation>
    <scope>NUCLEOTIDE SEQUENCE [LARGE SCALE GENOMIC DNA]</scope>
    <source>
        <strain>Sd197</strain>
    </source>
</reference>
<keyword id="KW-1185">Reference proteome</keyword>
<keyword id="KW-0687">Ribonucleoprotein</keyword>
<keyword id="KW-0689">Ribosomal protein</keyword>
<keyword id="KW-0694">RNA-binding</keyword>
<keyword id="KW-0699">rRNA-binding</keyword>
<name>RS8_SHIDS</name>
<sequence>MSMQDPIADMLTRIRNGQAANKAAVTMPSSKLKVAIANVLKEEGFIEDFKVEGDTKPELELTLKYFQGKAVVESIQRVSRPGLRIYKRKDELPKVMAGLGIAVVSTSKGVMTDRAARQAGLGGEIICYVA</sequence>
<organism>
    <name type="scientific">Shigella dysenteriae serotype 1 (strain Sd197)</name>
    <dbReference type="NCBI Taxonomy" id="300267"/>
    <lineage>
        <taxon>Bacteria</taxon>
        <taxon>Pseudomonadati</taxon>
        <taxon>Pseudomonadota</taxon>
        <taxon>Gammaproteobacteria</taxon>
        <taxon>Enterobacterales</taxon>
        <taxon>Enterobacteriaceae</taxon>
        <taxon>Shigella</taxon>
    </lineage>
</organism>
<dbReference type="EMBL" id="CP000034">
    <property type="protein sequence ID" value="ABB63460.1"/>
    <property type="molecule type" value="Genomic_DNA"/>
</dbReference>
<dbReference type="RefSeq" id="WP_000062611.1">
    <property type="nucleotide sequence ID" value="NC_007606.1"/>
</dbReference>
<dbReference type="RefSeq" id="YP_404951.1">
    <property type="nucleotide sequence ID" value="NC_007606.1"/>
</dbReference>
<dbReference type="SMR" id="Q32B45"/>
<dbReference type="STRING" id="300267.SDY_3482"/>
<dbReference type="EnsemblBacteria" id="ABB63460">
    <property type="protein sequence ID" value="ABB63460"/>
    <property type="gene ID" value="SDY_3482"/>
</dbReference>
<dbReference type="GeneID" id="93778681"/>
<dbReference type="KEGG" id="sdy:SDY_3482"/>
<dbReference type="PATRIC" id="fig|300267.13.peg.4135"/>
<dbReference type="HOGENOM" id="CLU_098428_0_0_6"/>
<dbReference type="Proteomes" id="UP000002716">
    <property type="component" value="Chromosome"/>
</dbReference>
<dbReference type="GO" id="GO:1990904">
    <property type="term" value="C:ribonucleoprotein complex"/>
    <property type="evidence" value="ECO:0007669"/>
    <property type="project" value="UniProtKB-KW"/>
</dbReference>
<dbReference type="GO" id="GO:0005840">
    <property type="term" value="C:ribosome"/>
    <property type="evidence" value="ECO:0007669"/>
    <property type="project" value="UniProtKB-KW"/>
</dbReference>
<dbReference type="GO" id="GO:0019843">
    <property type="term" value="F:rRNA binding"/>
    <property type="evidence" value="ECO:0007669"/>
    <property type="project" value="UniProtKB-UniRule"/>
</dbReference>
<dbReference type="GO" id="GO:0003735">
    <property type="term" value="F:structural constituent of ribosome"/>
    <property type="evidence" value="ECO:0007669"/>
    <property type="project" value="InterPro"/>
</dbReference>
<dbReference type="GO" id="GO:0006412">
    <property type="term" value="P:translation"/>
    <property type="evidence" value="ECO:0007669"/>
    <property type="project" value="UniProtKB-UniRule"/>
</dbReference>
<dbReference type="FunFam" id="3.30.1370.30:FF:000003">
    <property type="entry name" value="30S ribosomal protein S8"/>
    <property type="match status" value="1"/>
</dbReference>
<dbReference type="FunFam" id="3.30.1490.10:FF:000001">
    <property type="entry name" value="30S ribosomal protein S8"/>
    <property type="match status" value="1"/>
</dbReference>
<dbReference type="Gene3D" id="3.30.1370.30">
    <property type="match status" value="1"/>
</dbReference>
<dbReference type="Gene3D" id="3.30.1490.10">
    <property type="match status" value="1"/>
</dbReference>
<dbReference type="HAMAP" id="MF_01302_B">
    <property type="entry name" value="Ribosomal_uS8_B"/>
    <property type="match status" value="1"/>
</dbReference>
<dbReference type="InterPro" id="IPR000630">
    <property type="entry name" value="Ribosomal_uS8"/>
</dbReference>
<dbReference type="InterPro" id="IPR047863">
    <property type="entry name" value="Ribosomal_uS8_CS"/>
</dbReference>
<dbReference type="InterPro" id="IPR035987">
    <property type="entry name" value="Ribosomal_uS8_sf"/>
</dbReference>
<dbReference type="NCBIfam" id="NF001109">
    <property type="entry name" value="PRK00136.1"/>
    <property type="match status" value="1"/>
</dbReference>
<dbReference type="PANTHER" id="PTHR11758">
    <property type="entry name" value="40S RIBOSOMAL PROTEIN S15A"/>
    <property type="match status" value="1"/>
</dbReference>
<dbReference type="Pfam" id="PF00410">
    <property type="entry name" value="Ribosomal_S8"/>
    <property type="match status" value="1"/>
</dbReference>
<dbReference type="SUPFAM" id="SSF56047">
    <property type="entry name" value="Ribosomal protein S8"/>
    <property type="match status" value="1"/>
</dbReference>
<dbReference type="PROSITE" id="PS00053">
    <property type="entry name" value="RIBOSOMAL_S8"/>
    <property type="match status" value="1"/>
</dbReference>
<protein>
    <recommendedName>
        <fullName evidence="2">Small ribosomal subunit protein uS8</fullName>
    </recommendedName>
    <alternativeName>
        <fullName evidence="3">30S ribosomal protein S8</fullName>
    </alternativeName>
</protein>
<proteinExistence type="inferred from homology"/>